<comment type="catalytic activity">
    <reaction evidence="1">
        <text>2-formamido-N(1)-(5-O-phospho-beta-D-ribosyl)acetamidine + ATP = 5-amino-1-(5-phospho-beta-D-ribosyl)imidazole + ADP + phosphate + H(+)</text>
        <dbReference type="Rhea" id="RHEA:23032"/>
        <dbReference type="ChEBI" id="CHEBI:15378"/>
        <dbReference type="ChEBI" id="CHEBI:30616"/>
        <dbReference type="ChEBI" id="CHEBI:43474"/>
        <dbReference type="ChEBI" id="CHEBI:137981"/>
        <dbReference type="ChEBI" id="CHEBI:147287"/>
        <dbReference type="ChEBI" id="CHEBI:456216"/>
        <dbReference type="EC" id="6.3.3.1"/>
    </reaction>
</comment>
<comment type="pathway">
    <text evidence="1">Purine metabolism; IMP biosynthesis via de novo pathway; 5-amino-1-(5-phospho-D-ribosyl)imidazole from N(2)-formyl-N(1)-(5-phospho-D-ribosyl)glycinamide: step 2/2.</text>
</comment>
<comment type="subcellular location">
    <subcellularLocation>
        <location evidence="1">Cytoplasm</location>
    </subcellularLocation>
</comment>
<comment type="similarity">
    <text evidence="1">Belongs to the AIR synthase family.</text>
</comment>
<name>PUR5_NEIMF</name>
<feature type="chain" id="PRO_1000046450" description="Phosphoribosylformylglycinamidine cyclo-ligase">
    <location>
        <begin position="1"/>
        <end position="344"/>
    </location>
</feature>
<gene>
    <name evidence="1" type="primary">purM</name>
    <name type="ordered locus">NMC1152</name>
</gene>
<sequence length="344" mass="37005">MSTSLSYRDAGVDIDAGDQLVENIKPFAKRTMRPEVLGDLGGFGALVEIGKKYKNPVLVSGTDGVGTKLKLAFDWDKHDTVGIDLVAMSVNDILVQGAEPLFFLDYFACGELDVPRATDVIKGIAQGCEESGCALIGGETAEMPGMYPVGEYDLAGFAVGVVEKENVITGRSIGAGDVVLGLASNGAHSNGYSLIRKIIERDNPDLDAEFDNGKTLREAVIAPTRLYVKPILAALEKFTIKGMAHITGGGITENVPRVLPENTVAQIDAKSWELPKLFQWLQKAGNVETQEMYRTFNCGIGMVVIVAAEDADAVQDLLGEQGETVYRLGLIRERQGDEHQTQVA</sequence>
<dbReference type="EC" id="6.3.3.1" evidence="1"/>
<dbReference type="EMBL" id="AM421808">
    <property type="protein sequence ID" value="CAM10401.1"/>
    <property type="molecule type" value="Genomic_DNA"/>
</dbReference>
<dbReference type="RefSeq" id="WP_002220950.1">
    <property type="nucleotide sequence ID" value="NC_008767.1"/>
</dbReference>
<dbReference type="SMR" id="A1KU60"/>
<dbReference type="KEGG" id="nmc:NMC1152"/>
<dbReference type="HOGENOM" id="CLU_047116_0_0_4"/>
<dbReference type="UniPathway" id="UPA00074">
    <property type="reaction ID" value="UER00129"/>
</dbReference>
<dbReference type="Proteomes" id="UP000002286">
    <property type="component" value="Chromosome"/>
</dbReference>
<dbReference type="GO" id="GO:0005829">
    <property type="term" value="C:cytosol"/>
    <property type="evidence" value="ECO:0007669"/>
    <property type="project" value="TreeGrafter"/>
</dbReference>
<dbReference type="GO" id="GO:0005524">
    <property type="term" value="F:ATP binding"/>
    <property type="evidence" value="ECO:0007669"/>
    <property type="project" value="UniProtKB-KW"/>
</dbReference>
<dbReference type="GO" id="GO:0004637">
    <property type="term" value="F:phosphoribosylamine-glycine ligase activity"/>
    <property type="evidence" value="ECO:0007669"/>
    <property type="project" value="TreeGrafter"/>
</dbReference>
<dbReference type="GO" id="GO:0004641">
    <property type="term" value="F:phosphoribosylformylglycinamidine cyclo-ligase activity"/>
    <property type="evidence" value="ECO:0007669"/>
    <property type="project" value="UniProtKB-UniRule"/>
</dbReference>
<dbReference type="GO" id="GO:0006189">
    <property type="term" value="P:'de novo' IMP biosynthetic process"/>
    <property type="evidence" value="ECO:0007669"/>
    <property type="project" value="UniProtKB-UniRule"/>
</dbReference>
<dbReference type="GO" id="GO:0046084">
    <property type="term" value="P:adenine biosynthetic process"/>
    <property type="evidence" value="ECO:0007669"/>
    <property type="project" value="TreeGrafter"/>
</dbReference>
<dbReference type="CDD" id="cd02196">
    <property type="entry name" value="PurM"/>
    <property type="match status" value="1"/>
</dbReference>
<dbReference type="FunFam" id="3.30.1330.10:FF:000001">
    <property type="entry name" value="Phosphoribosylformylglycinamidine cyclo-ligase"/>
    <property type="match status" value="1"/>
</dbReference>
<dbReference type="FunFam" id="3.90.650.10:FF:000001">
    <property type="entry name" value="Phosphoribosylformylglycinamidine cyclo-ligase"/>
    <property type="match status" value="1"/>
</dbReference>
<dbReference type="Gene3D" id="3.90.650.10">
    <property type="entry name" value="PurM-like C-terminal domain"/>
    <property type="match status" value="1"/>
</dbReference>
<dbReference type="Gene3D" id="3.30.1330.10">
    <property type="entry name" value="PurM-like, N-terminal domain"/>
    <property type="match status" value="1"/>
</dbReference>
<dbReference type="HAMAP" id="MF_00741">
    <property type="entry name" value="AIRS"/>
    <property type="match status" value="1"/>
</dbReference>
<dbReference type="InterPro" id="IPR010918">
    <property type="entry name" value="PurM-like_C_dom"/>
</dbReference>
<dbReference type="InterPro" id="IPR036676">
    <property type="entry name" value="PurM-like_C_sf"/>
</dbReference>
<dbReference type="InterPro" id="IPR016188">
    <property type="entry name" value="PurM-like_N"/>
</dbReference>
<dbReference type="InterPro" id="IPR036921">
    <property type="entry name" value="PurM-like_N_sf"/>
</dbReference>
<dbReference type="InterPro" id="IPR004733">
    <property type="entry name" value="PurM_cligase"/>
</dbReference>
<dbReference type="NCBIfam" id="TIGR00878">
    <property type="entry name" value="purM"/>
    <property type="match status" value="1"/>
</dbReference>
<dbReference type="PANTHER" id="PTHR10520:SF12">
    <property type="entry name" value="TRIFUNCTIONAL PURINE BIOSYNTHETIC PROTEIN ADENOSINE-3"/>
    <property type="match status" value="1"/>
</dbReference>
<dbReference type="PANTHER" id="PTHR10520">
    <property type="entry name" value="TRIFUNCTIONAL PURINE BIOSYNTHETIC PROTEIN ADENOSINE-3-RELATED"/>
    <property type="match status" value="1"/>
</dbReference>
<dbReference type="Pfam" id="PF00586">
    <property type="entry name" value="AIRS"/>
    <property type="match status" value="1"/>
</dbReference>
<dbReference type="Pfam" id="PF02769">
    <property type="entry name" value="AIRS_C"/>
    <property type="match status" value="1"/>
</dbReference>
<dbReference type="SUPFAM" id="SSF56042">
    <property type="entry name" value="PurM C-terminal domain-like"/>
    <property type="match status" value="1"/>
</dbReference>
<dbReference type="SUPFAM" id="SSF55326">
    <property type="entry name" value="PurM N-terminal domain-like"/>
    <property type="match status" value="1"/>
</dbReference>
<protein>
    <recommendedName>
        <fullName evidence="1">Phosphoribosylformylglycinamidine cyclo-ligase</fullName>
        <ecNumber evidence="1">6.3.3.1</ecNumber>
    </recommendedName>
    <alternativeName>
        <fullName evidence="1">AIR synthase</fullName>
    </alternativeName>
    <alternativeName>
        <fullName evidence="1">AIRS</fullName>
    </alternativeName>
    <alternativeName>
        <fullName evidence="1">Phosphoribosyl-aminoimidazole synthetase</fullName>
    </alternativeName>
</protein>
<keyword id="KW-0067">ATP-binding</keyword>
<keyword id="KW-0963">Cytoplasm</keyword>
<keyword id="KW-0436">Ligase</keyword>
<keyword id="KW-0547">Nucleotide-binding</keyword>
<keyword id="KW-0658">Purine biosynthesis</keyword>
<accession>A1KU60</accession>
<proteinExistence type="inferred from homology"/>
<reference key="1">
    <citation type="journal article" date="2007" name="PLoS Genet.">
        <title>Meningococcal genetic variation mechanisms viewed through comparative analysis of serogroup C strain FAM18.</title>
        <authorList>
            <person name="Bentley S.D."/>
            <person name="Vernikos G.S."/>
            <person name="Snyder L.A.S."/>
            <person name="Churcher C."/>
            <person name="Arrowsmith C."/>
            <person name="Chillingworth T."/>
            <person name="Cronin A."/>
            <person name="Davis P.H."/>
            <person name="Holroyd N.E."/>
            <person name="Jagels K."/>
            <person name="Maddison M."/>
            <person name="Moule S."/>
            <person name="Rabbinowitsch E."/>
            <person name="Sharp S."/>
            <person name="Unwin L."/>
            <person name="Whitehead S."/>
            <person name="Quail M.A."/>
            <person name="Achtman M."/>
            <person name="Barrell B.G."/>
            <person name="Saunders N.J."/>
            <person name="Parkhill J."/>
        </authorList>
    </citation>
    <scope>NUCLEOTIDE SEQUENCE [LARGE SCALE GENOMIC DNA]</scope>
    <source>
        <strain>ATCC 700532 / DSM 15464 / FAM18</strain>
    </source>
</reference>
<organism>
    <name type="scientific">Neisseria meningitidis serogroup C / serotype 2a (strain ATCC 700532 / DSM 15464 / FAM18)</name>
    <dbReference type="NCBI Taxonomy" id="272831"/>
    <lineage>
        <taxon>Bacteria</taxon>
        <taxon>Pseudomonadati</taxon>
        <taxon>Pseudomonadota</taxon>
        <taxon>Betaproteobacteria</taxon>
        <taxon>Neisseriales</taxon>
        <taxon>Neisseriaceae</taxon>
        <taxon>Neisseria</taxon>
    </lineage>
</organism>
<evidence type="ECO:0000255" key="1">
    <source>
        <dbReference type="HAMAP-Rule" id="MF_00741"/>
    </source>
</evidence>